<reference key="1">
    <citation type="journal article" date="2006" name="Science">
        <title>Genome of rice cluster I archaea -- the key methane producers in the rice rhizosphere.</title>
        <authorList>
            <person name="Erkel C."/>
            <person name="Kube M."/>
            <person name="Reinhardt R."/>
            <person name="Liesack W."/>
        </authorList>
    </citation>
    <scope>NUCLEOTIDE SEQUENCE [LARGE SCALE GENOMIC DNA]</scope>
    <source>
        <strain>DSM 22066 / NBRC 105507 / MRE50</strain>
    </source>
</reference>
<name>NCPP_METAR</name>
<protein>
    <recommendedName>
        <fullName evidence="1">Probable inosine/xanthosine triphosphatase</fullName>
        <shortName evidence="1">ITPase/XTPase</shortName>
        <ecNumber evidence="1">3.6.1.73</ecNumber>
    </recommendedName>
    <alternativeName>
        <fullName evidence="1">Non-canonical purine NTP phosphatase</fullName>
    </alternativeName>
    <alternativeName>
        <fullName evidence="1">Non-standard purine NTP phosphatase</fullName>
    </alternativeName>
    <alternativeName>
        <fullName evidence="1">Nucleoside-triphosphate phosphatase</fullName>
        <shortName evidence="1">NTPase</shortName>
    </alternativeName>
</protein>
<dbReference type="EC" id="3.6.1.73" evidence="1"/>
<dbReference type="EMBL" id="AM114193">
    <property type="protein sequence ID" value="CAJ36416.1"/>
    <property type="molecule type" value="Genomic_DNA"/>
</dbReference>
<dbReference type="RefSeq" id="WP_012036109.1">
    <property type="nucleotide sequence ID" value="NC_009464.1"/>
</dbReference>
<dbReference type="SMR" id="Q0W5C7"/>
<dbReference type="STRING" id="351160.RCIX1099"/>
<dbReference type="GeneID" id="5144219"/>
<dbReference type="KEGG" id="rci:RCIX1099"/>
<dbReference type="PATRIC" id="fig|351160.9.peg.1823"/>
<dbReference type="eggNOG" id="arCOG01221">
    <property type="taxonomic scope" value="Archaea"/>
</dbReference>
<dbReference type="OrthoDB" id="52857at2157"/>
<dbReference type="Proteomes" id="UP000000663">
    <property type="component" value="Chromosome"/>
</dbReference>
<dbReference type="GO" id="GO:0103023">
    <property type="term" value="F:ITPase activity"/>
    <property type="evidence" value="ECO:0007669"/>
    <property type="project" value="UniProtKB-EC"/>
</dbReference>
<dbReference type="GO" id="GO:0046872">
    <property type="term" value="F:metal ion binding"/>
    <property type="evidence" value="ECO:0007669"/>
    <property type="project" value="UniProtKB-KW"/>
</dbReference>
<dbReference type="GO" id="GO:0000166">
    <property type="term" value="F:nucleotide binding"/>
    <property type="evidence" value="ECO:0007669"/>
    <property type="project" value="UniProtKB-KW"/>
</dbReference>
<dbReference type="GO" id="GO:0017111">
    <property type="term" value="F:ribonucleoside triphosphate phosphatase activity"/>
    <property type="evidence" value="ECO:0000250"/>
    <property type="project" value="UniProtKB"/>
</dbReference>
<dbReference type="GO" id="GO:0009117">
    <property type="term" value="P:nucleotide metabolic process"/>
    <property type="evidence" value="ECO:0007669"/>
    <property type="project" value="UniProtKB-KW"/>
</dbReference>
<dbReference type="GO" id="GO:0006772">
    <property type="term" value="P:thiamine metabolic process"/>
    <property type="evidence" value="ECO:0007669"/>
    <property type="project" value="TreeGrafter"/>
</dbReference>
<dbReference type="FunFam" id="3.90.950.10:FF:000002">
    <property type="entry name" value="Inosine/xanthosine triphosphatase"/>
    <property type="match status" value="1"/>
</dbReference>
<dbReference type="Gene3D" id="3.90.950.10">
    <property type="match status" value="1"/>
</dbReference>
<dbReference type="HAMAP" id="MF_00648">
    <property type="entry name" value="Non_canon_purine_NTPase_YjjX"/>
    <property type="match status" value="1"/>
</dbReference>
<dbReference type="InterPro" id="IPR029001">
    <property type="entry name" value="ITPase-like_fam"/>
</dbReference>
<dbReference type="InterPro" id="IPR002786">
    <property type="entry name" value="Non_canon_purine_NTPase"/>
</dbReference>
<dbReference type="InterPro" id="IPR026533">
    <property type="entry name" value="NTPase/PRRC1"/>
</dbReference>
<dbReference type="InterPro" id="IPR050299">
    <property type="entry name" value="YjjX_NTPase"/>
</dbReference>
<dbReference type="NCBIfam" id="TIGR00258">
    <property type="entry name" value="inosine/xanthosine triphosphatase"/>
    <property type="match status" value="1"/>
</dbReference>
<dbReference type="NCBIfam" id="NF003039">
    <property type="entry name" value="PRK03941.1"/>
    <property type="match status" value="1"/>
</dbReference>
<dbReference type="PANTHER" id="PTHR34699">
    <property type="match status" value="1"/>
</dbReference>
<dbReference type="PANTHER" id="PTHR34699:SF2">
    <property type="entry name" value="NON-CANONICAL PURINE NTP PHOSPHATASE_PRRC1 DOMAIN-CONTAINING PROTEIN"/>
    <property type="match status" value="1"/>
</dbReference>
<dbReference type="Pfam" id="PF01931">
    <property type="entry name" value="NTPase_I-T"/>
    <property type="match status" value="1"/>
</dbReference>
<dbReference type="SUPFAM" id="SSF52972">
    <property type="entry name" value="ITPase-like"/>
    <property type="match status" value="1"/>
</dbReference>
<gene>
    <name type="ordered locus">UNCMA_17840</name>
    <name type="ORF">RCIX1099</name>
</gene>
<organism>
    <name type="scientific">Methanocella arvoryzae (strain DSM 22066 / NBRC 105507 / MRE50)</name>
    <dbReference type="NCBI Taxonomy" id="351160"/>
    <lineage>
        <taxon>Archaea</taxon>
        <taxon>Methanobacteriati</taxon>
        <taxon>Methanobacteriota</taxon>
        <taxon>Stenosarchaea group</taxon>
        <taxon>Methanomicrobia</taxon>
        <taxon>Methanocellales</taxon>
        <taxon>Methanocellaceae</taxon>
        <taxon>Methanocella</taxon>
    </lineage>
</organism>
<sequence>MKVAVGTVNPVKVNAVKNVFGKLFDNVEVEGRKVGSGVPDQPFGSETIKGAINRAKNAYRTGDYDYGVGIEAGLTDVEGYVLDIQFCAVFDGLDCTTGCGSGFQYPPTVLAEVLTGREVGDVMSELTGIENLGQKMGAIGYLSRGMLDRTQLTEQSVLMAMIPRLNPKLYRQID</sequence>
<proteinExistence type="inferred from homology"/>
<feature type="chain" id="PRO_1000061462" description="Probable inosine/xanthosine triphosphatase">
    <location>
        <begin position="1"/>
        <end position="174"/>
    </location>
</feature>
<feature type="binding site" evidence="1">
    <location>
        <position position="63"/>
    </location>
    <ligand>
        <name>Mg(2+)</name>
        <dbReference type="ChEBI" id="CHEBI:18420"/>
    </ligand>
</feature>
<keyword id="KW-0378">Hydrolase</keyword>
<keyword id="KW-0460">Magnesium</keyword>
<keyword id="KW-0464">Manganese</keyword>
<keyword id="KW-0479">Metal-binding</keyword>
<keyword id="KW-0546">Nucleotide metabolism</keyword>
<keyword id="KW-0547">Nucleotide-binding</keyword>
<keyword id="KW-1185">Reference proteome</keyword>
<accession>Q0W5C7</accession>
<evidence type="ECO:0000255" key="1">
    <source>
        <dbReference type="HAMAP-Rule" id="MF_00648"/>
    </source>
</evidence>
<comment type="function">
    <text evidence="1">Phosphatase that hydrolyzes non-canonical purine nucleotides such as XTP and ITP to their respective diphosphate derivatives. Probably excludes non-canonical purines from DNA/RNA precursor pool, thus preventing their incorporation into DNA/RNA and avoiding chromosomal lesions.</text>
</comment>
<comment type="catalytic activity">
    <reaction evidence="1">
        <text>XTP + H2O = XDP + phosphate + H(+)</text>
        <dbReference type="Rhea" id="RHEA:28406"/>
        <dbReference type="ChEBI" id="CHEBI:15377"/>
        <dbReference type="ChEBI" id="CHEBI:15378"/>
        <dbReference type="ChEBI" id="CHEBI:43474"/>
        <dbReference type="ChEBI" id="CHEBI:59884"/>
        <dbReference type="ChEBI" id="CHEBI:61314"/>
        <dbReference type="EC" id="3.6.1.73"/>
    </reaction>
</comment>
<comment type="catalytic activity">
    <reaction evidence="1">
        <text>ITP + H2O = IDP + phosphate + H(+)</text>
        <dbReference type="Rhea" id="RHEA:28330"/>
        <dbReference type="ChEBI" id="CHEBI:15377"/>
        <dbReference type="ChEBI" id="CHEBI:15378"/>
        <dbReference type="ChEBI" id="CHEBI:43474"/>
        <dbReference type="ChEBI" id="CHEBI:58280"/>
        <dbReference type="ChEBI" id="CHEBI:61402"/>
        <dbReference type="EC" id="3.6.1.73"/>
    </reaction>
</comment>
<comment type="cofactor">
    <cofactor evidence="1">
        <name>Mg(2+)</name>
        <dbReference type="ChEBI" id="CHEBI:18420"/>
    </cofactor>
    <cofactor evidence="1">
        <name>Mn(2+)</name>
        <dbReference type="ChEBI" id="CHEBI:29035"/>
    </cofactor>
    <text evidence="1">Binds 1 divalent metal cation per subunit; can use either Mg(2+) or Mn(2+).</text>
</comment>
<comment type="subunit">
    <text evidence="1">Homodimer.</text>
</comment>
<comment type="similarity">
    <text evidence="1">Belongs to the YjjX NTPase family.</text>
</comment>